<comment type="function">
    <text evidence="3">Catalyzes the NAD-dependent oxidation and subsequent decarboxylation of D-threonate 4-phosphate to produce dihydroxyacetone phosphate (DHAP). Can also use 4-hydroxy-L-threonine 4-phosphate as substrate.</text>
</comment>
<comment type="catalytic activity">
    <reaction evidence="3">
        <text>4-O-phospho-D-threonate + NAD(+) = dihydroxyacetone phosphate + CO2 + NADH</text>
        <dbReference type="Rhea" id="RHEA:52396"/>
        <dbReference type="ChEBI" id="CHEBI:16526"/>
        <dbReference type="ChEBI" id="CHEBI:57540"/>
        <dbReference type="ChEBI" id="CHEBI:57642"/>
        <dbReference type="ChEBI" id="CHEBI:57945"/>
        <dbReference type="ChEBI" id="CHEBI:136590"/>
        <dbReference type="EC" id="1.1.1.408"/>
    </reaction>
</comment>
<comment type="cofactor">
    <cofactor evidence="1">
        <name>a divalent metal cation</name>
        <dbReference type="ChEBI" id="CHEBI:60240"/>
    </cofactor>
    <text evidence="1">Binds 1 divalent metal cation per subunit.</text>
</comment>
<comment type="biophysicochemical properties">
    <kinetics>
        <KM evidence="3">0.025 mM for D-threonate 4-phosphate</KM>
        <KM evidence="3">0.26 mM for 4-hydroxy-L-threonine 4-phosphate</KM>
        <text evidence="3">kcat is 8.6 sec(-1) with D-threonate 4-phosphate as substrate. kcat is 2.9 sec(-1) with 4-hydroxy-L-threonine 4-phosphate as substrate.</text>
    </kinetics>
</comment>
<comment type="subunit">
    <text evidence="2">Homodimer.</text>
</comment>
<comment type="similarity">
    <text evidence="5">Belongs to the PdxA family. PdxA2 subfamily.</text>
</comment>
<dbReference type="EC" id="1.1.1.408" evidence="3"/>
<dbReference type="EMBL" id="BX950851">
    <property type="protein sequence ID" value="CAG76659.1"/>
    <property type="molecule type" value="Genomic_DNA"/>
</dbReference>
<dbReference type="RefSeq" id="WP_011095261.1">
    <property type="nucleotide sequence ID" value="NC_004547.2"/>
</dbReference>
<dbReference type="SMR" id="Q6D0N8"/>
<dbReference type="STRING" id="218491.ECA3760"/>
<dbReference type="KEGG" id="eca:ECA3760"/>
<dbReference type="PATRIC" id="fig|218491.5.peg.3814"/>
<dbReference type="eggNOG" id="COG1995">
    <property type="taxonomic scope" value="Bacteria"/>
</dbReference>
<dbReference type="HOGENOM" id="CLU_040168_0_1_6"/>
<dbReference type="OrthoDB" id="9801783at2"/>
<dbReference type="Proteomes" id="UP000007966">
    <property type="component" value="Chromosome"/>
</dbReference>
<dbReference type="GO" id="GO:0046872">
    <property type="term" value="F:metal ion binding"/>
    <property type="evidence" value="ECO:0007669"/>
    <property type="project" value="UniProtKB-KW"/>
</dbReference>
<dbReference type="GO" id="GO:0051287">
    <property type="term" value="F:NAD binding"/>
    <property type="evidence" value="ECO:0007669"/>
    <property type="project" value="InterPro"/>
</dbReference>
<dbReference type="GO" id="GO:0016491">
    <property type="term" value="F:oxidoreductase activity"/>
    <property type="evidence" value="ECO:0007669"/>
    <property type="project" value="UniProtKB-KW"/>
</dbReference>
<dbReference type="Gene3D" id="3.40.718.10">
    <property type="entry name" value="Isopropylmalate Dehydrogenase"/>
    <property type="match status" value="1"/>
</dbReference>
<dbReference type="InterPro" id="IPR005255">
    <property type="entry name" value="PdxA_fam"/>
</dbReference>
<dbReference type="NCBIfam" id="TIGR00557">
    <property type="entry name" value="pdxA"/>
    <property type="match status" value="1"/>
</dbReference>
<dbReference type="NCBIfam" id="NF002891">
    <property type="entry name" value="PRK03371.1"/>
    <property type="match status" value="1"/>
</dbReference>
<dbReference type="PANTHER" id="PTHR30004">
    <property type="entry name" value="4-HYDROXYTHREONINE-4-PHOSPHATE DEHYDROGENASE"/>
    <property type="match status" value="1"/>
</dbReference>
<dbReference type="PANTHER" id="PTHR30004:SF6">
    <property type="entry name" value="D-THREONATE 4-PHOSPHATE DEHYDROGENASE"/>
    <property type="match status" value="1"/>
</dbReference>
<dbReference type="Pfam" id="PF04166">
    <property type="entry name" value="PdxA"/>
    <property type="match status" value="1"/>
</dbReference>
<dbReference type="SUPFAM" id="SSF53659">
    <property type="entry name" value="Isocitrate/Isopropylmalate dehydrogenase-like"/>
    <property type="match status" value="1"/>
</dbReference>
<name>PDXA2_PECAS</name>
<protein>
    <recommendedName>
        <fullName evidence="4">D-threonate 4-phosphate dehydrogenase</fullName>
        <ecNumber evidence="3">1.1.1.408</ecNumber>
    </recommendedName>
</protein>
<accession>Q6D0N8</accession>
<feature type="chain" id="PRO_0000439818" description="D-threonate 4-phosphate dehydrogenase">
    <location>
        <begin position="1"/>
        <end position="326"/>
    </location>
</feature>
<feature type="binding site" evidence="1">
    <location>
        <position position="138"/>
    </location>
    <ligand>
        <name>substrate</name>
    </ligand>
</feature>
<feature type="binding site" evidence="1">
    <location>
        <position position="139"/>
    </location>
    <ligand>
        <name>substrate</name>
    </ligand>
</feature>
<feature type="binding site" evidence="1">
    <location>
        <position position="168"/>
    </location>
    <ligand>
        <name>a divalent metal cation</name>
        <dbReference type="ChEBI" id="CHEBI:60240"/>
        <note>ligand shared between dimeric partners</note>
    </ligand>
</feature>
<feature type="binding site" evidence="1">
    <location>
        <position position="212"/>
    </location>
    <ligand>
        <name>a divalent metal cation</name>
        <dbReference type="ChEBI" id="CHEBI:60240"/>
        <note>ligand shared between dimeric partners</note>
    </ligand>
</feature>
<feature type="binding site" evidence="1">
    <location>
        <position position="267"/>
    </location>
    <ligand>
        <name>a divalent metal cation</name>
        <dbReference type="ChEBI" id="CHEBI:60240"/>
        <note>ligand shared between dimeric partners</note>
    </ligand>
</feature>
<feature type="binding site" evidence="1">
    <location>
        <position position="275"/>
    </location>
    <ligand>
        <name>substrate</name>
    </ligand>
</feature>
<feature type="binding site" evidence="1">
    <location>
        <position position="284"/>
    </location>
    <ligand>
        <name>substrate</name>
    </ligand>
</feature>
<feature type="binding site" evidence="1">
    <location>
        <position position="293"/>
    </location>
    <ligand>
        <name>substrate</name>
    </ligand>
</feature>
<keyword id="KW-0119">Carbohydrate metabolism</keyword>
<keyword id="KW-0479">Metal-binding</keyword>
<keyword id="KW-0520">NAD</keyword>
<keyword id="KW-0560">Oxidoreductase</keyword>
<keyword id="KW-1185">Reference proteome</keyword>
<proteinExistence type="evidence at protein level"/>
<organism>
    <name type="scientific">Pectobacterium atrosepticum (strain SCRI 1043 / ATCC BAA-672)</name>
    <name type="common">Erwinia carotovora subsp. atroseptica</name>
    <dbReference type="NCBI Taxonomy" id="218491"/>
    <lineage>
        <taxon>Bacteria</taxon>
        <taxon>Pseudomonadati</taxon>
        <taxon>Pseudomonadota</taxon>
        <taxon>Gammaproteobacteria</taxon>
        <taxon>Enterobacterales</taxon>
        <taxon>Pectobacteriaceae</taxon>
        <taxon>Pectobacterium</taxon>
    </lineage>
</organism>
<evidence type="ECO:0000250" key="1">
    <source>
        <dbReference type="UniProtKB" id="P19624"/>
    </source>
</evidence>
<evidence type="ECO:0000250" key="2">
    <source>
        <dbReference type="UniProtKB" id="P58718"/>
    </source>
</evidence>
<evidence type="ECO:0000269" key="3">
    <source>
    </source>
</evidence>
<evidence type="ECO:0000303" key="4">
    <source>
    </source>
</evidence>
<evidence type="ECO:0000305" key="5"/>
<evidence type="ECO:0000312" key="6">
    <source>
        <dbReference type="EMBL" id="CAG76659.1"/>
    </source>
</evidence>
<gene>
    <name evidence="4" type="primary">pdxA2</name>
    <name evidence="6" type="ordered locus">ECA3760</name>
</gene>
<sequence length="326" mass="34952">MSKIIAVTMGDPAGIGPEIIIKSLAEGELSGASAVVVGCVQTMRRILALNVVPTVELKIIDKPADAVFAPGVINIIDEPLEDPQALKPGIVQAQAGDLAYRCIKKATALAMAGEVHAIATAPLNKEALHSAGHLYPGHTELLAKLTNSRDYAMVLYTDKLKVIHVSTHIALRKFLDTLNRDRVETVIEMADVFLKRVGFTHPRIAVAGVNPHAGENGLFGDEEIKIVSPSVEAMKAKGIDVYGPCPPDTVYLQAYEGQYDMVVAMYHDQGHIPLKLLGFYDGVNITAGLPFIRTSADHGTAFDIAWTGKAKPESMAISIQLAMQLA</sequence>
<reference key="1">
    <citation type="journal article" date="2004" name="Proc. Natl. Acad. Sci. U.S.A.">
        <title>Genome sequence of the enterobacterial phytopathogen Erwinia carotovora subsp. atroseptica and characterization of virulence factors.</title>
        <authorList>
            <person name="Bell K.S."/>
            <person name="Sebaihia M."/>
            <person name="Pritchard L."/>
            <person name="Holden M.T.G."/>
            <person name="Hyman L.J."/>
            <person name="Holeva M.C."/>
            <person name="Thomson N.R."/>
            <person name="Bentley S.D."/>
            <person name="Churcher L.J.C."/>
            <person name="Mungall K."/>
            <person name="Atkin R."/>
            <person name="Bason N."/>
            <person name="Brooks K."/>
            <person name="Chillingworth T."/>
            <person name="Clark K."/>
            <person name="Doggett J."/>
            <person name="Fraser A."/>
            <person name="Hance Z."/>
            <person name="Hauser H."/>
            <person name="Jagels K."/>
            <person name="Moule S."/>
            <person name="Norbertczak H."/>
            <person name="Ormond D."/>
            <person name="Price C."/>
            <person name="Quail M.A."/>
            <person name="Sanders M."/>
            <person name="Walker D."/>
            <person name="Whitehead S."/>
            <person name="Salmond G.P.C."/>
            <person name="Birch P.R.J."/>
            <person name="Parkhill J."/>
            <person name="Toth I.K."/>
        </authorList>
    </citation>
    <scope>NUCLEOTIDE SEQUENCE [LARGE SCALE GENOMIC DNA]</scope>
    <source>
        <strain>SCRI 1043 / ATCC BAA-672</strain>
    </source>
</reference>
<reference key="2">
    <citation type="journal article" date="2016" name="Proc. Natl. Acad. Sci. U.S.A.">
        <title>Assignment of function to a domain of unknown function: DUF1537 is a new kinase family in catabolic pathways for acid sugars.</title>
        <authorList>
            <person name="Zhang X."/>
            <person name="Carter M.S."/>
            <person name="Vetting M.W."/>
            <person name="San Francisco B."/>
            <person name="Zhao S."/>
            <person name="Al-Obaidi N.F."/>
            <person name="Solbiati J.O."/>
            <person name="Thiaville J.J."/>
            <person name="de Crecy-Lagard V."/>
            <person name="Jacobson M.P."/>
            <person name="Almo S.C."/>
            <person name="Gerlt J.A."/>
        </authorList>
    </citation>
    <scope>FUNCTION</scope>
    <scope>CATALYTIC ACTIVITY</scope>
    <scope>BIOPHYSICOCHEMICAL PROPERTIES</scope>
    <source>
        <strain>SCRI 1043 / ATCC BAA-672</strain>
    </source>
</reference>